<reference key="1">
    <citation type="journal article" date="2005" name="Nucleic Acids Res.">
        <title>Genome dynamics and diversity of Shigella species, the etiologic agents of bacillary dysentery.</title>
        <authorList>
            <person name="Yang F."/>
            <person name="Yang J."/>
            <person name="Zhang X."/>
            <person name="Chen L."/>
            <person name="Jiang Y."/>
            <person name="Yan Y."/>
            <person name="Tang X."/>
            <person name="Wang J."/>
            <person name="Xiong Z."/>
            <person name="Dong J."/>
            <person name="Xue Y."/>
            <person name="Zhu Y."/>
            <person name="Xu X."/>
            <person name="Sun L."/>
            <person name="Chen S."/>
            <person name="Nie H."/>
            <person name="Peng J."/>
            <person name="Xu J."/>
            <person name="Wang Y."/>
            <person name="Yuan Z."/>
            <person name="Wen Y."/>
            <person name="Yao Z."/>
            <person name="Shen Y."/>
            <person name="Qiang B."/>
            <person name="Hou Y."/>
            <person name="Yu J."/>
            <person name="Jin Q."/>
        </authorList>
    </citation>
    <scope>NUCLEOTIDE SEQUENCE [LARGE SCALE GENOMIC DNA]</scope>
    <source>
        <strain>Sb227</strain>
    </source>
</reference>
<feature type="chain" id="PRO_0000351708" description="L-rhamnonate dehydratase">
    <location>
        <begin position="1"/>
        <end position="405"/>
    </location>
</feature>
<feature type="active site" description="Proton acceptor" evidence="1">
    <location>
        <position position="329"/>
    </location>
</feature>
<feature type="binding site" evidence="1">
    <location>
        <position position="33"/>
    </location>
    <ligand>
        <name>substrate</name>
    </ligand>
</feature>
<feature type="binding site" evidence="1">
    <location>
        <position position="59"/>
    </location>
    <ligand>
        <name>substrate</name>
    </ligand>
</feature>
<feature type="binding site" evidence="1">
    <location>
        <position position="226"/>
    </location>
    <ligand>
        <name>Mg(2+)</name>
        <dbReference type="ChEBI" id="CHEBI:18420"/>
    </ligand>
</feature>
<feature type="binding site" evidence="1">
    <location>
        <position position="252"/>
    </location>
    <ligand>
        <name>Mg(2+)</name>
        <dbReference type="ChEBI" id="CHEBI:18420"/>
    </ligand>
</feature>
<feature type="binding site" evidence="1">
    <location>
        <position position="280"/>
    </location>
    <ligand>
        <name>Mg(2+)</name>
        <dbReference type="ChEBI" id="CHEBI:18420"/>
    </ligand>
</feature>
<feature type="binding site" evidence="1">
    <location>
        <position position="349"/>
    </location>
    <ligand>
        <name>substrate</name>
    </ligand>
</feature>
<feature type="site" description="Increases basicity of active site His" evidence="1">
    <location>
        <position position="302"/>
    </location>
</feature>
<feature type="site" description="Transition state stabilizer" evidence="1">
    <location>
        <position position="349"/>
    </location>
</feature>
<evidence type="ECO:0000255" key="1">
    <source>
        <dbReference type="HAMAP-Rule" id="MF_01288"/>
    </source>
</evidence>
<comment type="function">
    <text evidence="1">Catalyzes the dehydration of L-rhamnonate to 2-keto-3-deoxy-L-rhamnonate (KDR).</text>
</comment>
<comment type="catalytic activity">
    <reaction evidence="1">
        <text>L-rhamnonate = 2-dehydro-3-deoxy-L-rhamnonate + H2O</text>
        <dbReference type="Rhea" id="RHEA:23080"/>
        <dbReference type="ChEBI" id="CHEBI:15377"/>
        <dbReference type="ChEBI" id="CHEBI:58118"/>
        <dbReference type="ChEBI" id="CHEBI:58371"/>
        <dbReference type="EC" id="4.2.1.90"/>
    </reaction>
</comment>
<comment type="cofactor">
    <cofactor evidence="1">
        <name>Mg(2+)</name>
        <dbReference type="ChEBI" id="CHEBI:18420"/>
    </cofactor>
    <text evidence="1">Binds 1 Mg(2+) ion per subunit.</text>
</comment>
<comment type="subunit">
    <text evidence="1">Homooctamer; tetramer of dimers.</text>
</comment>
<comment type="miscellaneous">
    <text evidence="1">Reaction proceeds via a syn dehydration.</text>
</comment>
<comment type="similarity">
    <text evidence="1">Belongs to the mandelate racemase/muconate lactonizing enzyme family. RhamD subfamily.</text>
</comment>
<accession>Q31Z80</accession>
<organism>
    <name type="scientific">Shigella boydii serotype 4 (strain Sb227)</name>
    <dbReference type="NCBI Taxonomy" id="300268"/>
    <lineage>
        <taxon>Bacteria</taxon>
        <taxon>Pseudomonadati</taxon>
        <taxon>Pseudomonadota</taxon>
        <taxon>Gammaproteobacteria</taxon>
        <taxon>Enterobacterales</taxon>
        <taxon>Enterobacteriaceae</taxon>
        <taxon>Shigella</taxon>
    </lineage>
</organism>
<dbReference type="EC" id="4.2.1.90" evidence="1"/>
<dbReference type="EMBL" id="CP000036">
    <property type="protein sequence ID" value="ABB66628.1"/>
    <property type="molecule type" value="Genomic_DNA"/>
</dbReference>
<dbReference type="SMR" id="Q31Z80"/>
<dbReference type="KEGG" id="sbo:SBO_2047"/>
<dbReference type="HOGENOM" id="CLU_030273_1_0_6"/>
<dbReference type="Proteomes" id="UP000007067">
    <property type="component" value="Chromosome"/>
</dbReference>
<dbReference type="GO" id="GO:0050032">
    <property type="term" value="F:L-rhamnonate dehydratase activity"/>
    <property type="evidence" value="ECO:0007669"/>
    <property type="project" value="UniProtKB-UniRule"/>
</dbReference>
<dbReference type="GO" id="GO:0000287">
    <property type="term" value="F:magnesium ion binding"/>
    <property type="evidence" value="ECO:0007669"/>
    <property type="project" value="UniProtKB-UniRule"/>
</dbReference>
<dbReference type="GO" id="GO:0009063">
    <property type="term" value="P:amino acid catabolic process"/>
    <property type="evidence" value="ECO:0007669"/>
    <property type="project" value="InterPro"/>
</dbReference>
<dbReference type="GO" id="GO:0016052">
    <property type="term" value="P:carbohydrate catabolic process"/>
    <property type="evidence" value="ECO:0007669"/>
    <property type="project" value="TreeGrafter"/>
</dbReference>
<dbReference type="CDD" id="cd03327">
    <property type="entry name" value="MR_like_2"/>
    <property type="match status" value="1"/>
</dbReference>
<dbReference type="FunFam" id="3.30.390.10:FF:000007">
    <property type="entry name" value="L-rhamnonate dehydratase"/>
    <property type="match status" value="1"/>
</dbReference>
<dbReference type="FunFam" id="3.20.20.120:FF:000005">
    <property type="entry name" value="Putative L-rhamnonate dehydratase"/>
    <property type="match status" value="1"/>
</dbReference>
<dbReference type="Gene3D" id="3.20.20.120">
    <property type="entry name" value="Enolase-like C-terminal domain"/>
    <property type="match status" value="1"/>
</dbReference>
<dbReference type="Gene3D" id="3.30.390.10">
    <property type="entry name" value="Enolase-like, N-terminal domain"/>
    <property type="match status" value="1"/>
</dbReference>
<dbReference type="HAMAP" id="MF_01288">
    <property type="entry name" value="Rhamnon_dehydrat"/>
    <property type="match status" value="1"/>
</dbReference>
<dbReference type="InterPro" id="IPR036849">
    <property type="entry name" value="Enolase-like_C_sf"/>
</dbReference>
<dbReference type="InterPro" id="IPR029017">
    <property type="entry name" value="Enolase-like_N"/>
</dbReference>
<dbReference type="InterPro" id="IPR029065">
    <property type="entry name" value="Enolase_C-like"/>
</dbReference>
<dbReference type="InterPro" id="IPR023444">
    <property type="entry name" value="L-Rhamnon_dehydrat"/>
</dbReference>
<dbReference type="InterPro" id="IPR018110">
    <property type="entry name" value="Mandel_Rmase/mucon_lact_enz_CS"/>
</dbReference>
<dbReference type="InterPro" id="IPR013342">
    <property type="entry name" value="Mandelate_racemase_C"/>
</dbReference>
<dbReference type="InterPro" id="IPR013341">
    <property type="entry name" value="Mandelate_racemase_N_dom"/>
</dbReference>
<dbReference type="InterPro" id="IPR046945">
    <property type="entry name" value="RHMD-like"/>
</dbReference>
<dbReference type="NCBIfam" id="NF011968">
    <property type="entry name" value="PRK15440.1"/>
    <property type="match status" value="1"/>
</dbReference>
<dbReference type="PANTHER" id="PTHR13794">
    <property type="entry name" value="ENOLASE SUPERFAMILY, MANDELATE RACEMASE"/>
    <property type="match status" value="1"/>
</dbReference>
<dbReference type="PANTHER" id="PTHR13794:SF58">
    <property type="entry name" value="MITOCHONDRIAL ENOLASE SUPERFAMILY MEMBER 1"/>
    <property type="match status" value="1"/>
</dbReference>
<dbReference type="Pfam" id="PF13378">
    <property type="entry name" value="MR_MLE_C"/>
    <property type="match status" value="1"/>
</dbReference>
<dbReference type="Pfam" id="PF02746">
    <property type="entry name" value="MR_MLE_N"/>
    <property type="match status" value="1"/>
</dbReference>
<dbReference type="SFLD" id="SFLDS00001">
    <property type="entry name" value="Enolase"/>
    <property type="match status" value="1"/>
</dbReference>
<dbReference type="SFLD" id="SFLDF00006">
    <property type="entry name" value="rhamnonate_dehydratase"/>
    <property type="match status" value="1"/>
</dbReference>
<dbReference type="SMART" id="SM00922">
    <property type="entry name" value="MR_MLE"/>
    <property type="match status" value="1"/>
</dbReference>
<dbReference type="SUPFAM" id="SSF51604">
    <property type="entry name" value="Enolase C-terminal domain-like"/>
    <property type="match status" value="1"/>
</dbReference>
<dbReference type="SUPFAM" id="SSF54826">
    <property type="entry name" value="Enolase N-terminal domain-like"/>
    <property type="match status" value="1"/>
</dbReference>
<dbReference type="PROSITE" id="PS00908">
    <property type="entry name" value="MR_MLE_1"/>
    <property type="match status" value="1"/>
</dbReference>
<keyword id="KW-0456">Lyase</keyword>
<keyword id="KW-0460">Magnesium</keyword>
<keyword id="KW-0479">Metal-binding</keyword>
<sequence length="405" mass="44711">MENIMTLPKIKQVRAWFTGGATAEKGAGGGDYHDQGANHWIDDHIATPMSKYRDYEQSRQSFGINVLGTLVVEVEAENGQTGFAVSTAGEMGCFIVEKHLNRFIEGKCVSDIKLIHDQMLNATLYYSGSGGLVMNTISCVDLALWDLFGKVVGLPVYKLLGGAVRDEIQFYATGARPDLAKEMGFIGGKMPTHWGPHDGDAGIRKDAAMVADMREKCGEDFWLMLDCWMSQDVNYATKLAHACAPYNLKWIEECLPPQQYEGYRELKRNAPVGMMVTSGEHHGTLQSFRTLSETGIDIMQPDVGWCGGLTTLVEIAAIAKSRGQLVVPHGSSVYSHHAVITFTNTPFSEFLMTSPDCSTMRPQFDPILLNEPVPVNGRIHKSVLDKPGFGVELNRDCNLKRPYSH</sequence>
<name>RHMD_SHIBS</name>
<protein>
    <recommendedName>
        <fullName evidence="1">L-rhamnonate dehydratase</fullName>
        <shortName evidence="1">RhamD</shortName>
        <ecNumber evidence="1">4.2.1.90</ecNumber>
    </recommendedName>
</protein>
<proteinExistence type="inferred from homology"/>
<gene>
    <name evidence="1" type="primary">rhmD</name>
    <name type="ordered locus">SBO_2047</name>
</gene>